<organism>
    <name type="scientific">Haloarcula marismortui (strain ATCC 43049 / DSM 3752 / JCM 8966 / VKM B-1809)</name>
    <name type="common">Halobacterium marismortui</name>
    <dbReference type="NCBI Taxonomy" id="272569"/>
    <lineage>
        <taxon>Archaea</taxon>
        <taxon>Methanobacteriati</taxon>
        <taxon>Methanobacteriota</taxon>
        <taxon>Stenosarchaea group</taxon>
        <taxon>Halobacteria</taxon>
        <taxon>Halobacteriales</taxon>
        <taxon>Haloarculaceae</taxon>
        <taxon>Haloarcula</taxon>
    </lineage>
</organism>
<proteinExistence type="inferred from homology"/>
<evidence type="ECO:0000255" key="1">
    <source>
        <dbReference type="HAMAP-Rule" id="MF_01702"/>
    </source>
</evidence>
<evidence type="ECO:0000256" key="2">
    <source>
        <dbReference type="SAM" id="MobiDB-lite"/>
    </source>
</evidence>
<keyword id="KW-0067">ATP-binding</keyword>
<keyword id="KW-1003">Cell membrane</keyword>
<keyword id="KW-0472">Membrane</keyword>
<keyword id="KW-0547">Nucleotide-binding</keyword>
<keyword id="KW-0592">Phosphate transport</keyword>
<keyword id="KW-1185">Reference proteome</keyword>
<keyword id="KW-1278">Translocase</keyword>
<keyword id="KW-0813">Transport</keyword>
<name>PSTB2_HALMA</name>
<gene>
    <name evidence="1" type="primary">pstB2</name>
    <name type="ordered locus">rrnAC2146</name>
</gene>
<protein>
    <recommendedName>
        <fullName evidence="1">Phosphate import ATP-binding protein PstB 2</fullName>
        <ecNumber evidence="1">7.3.2.1</ecNumber>
    </recommendedName>
    <alternativeName>
        <fullName evidence="1">ABC phosphate transporter 2</fullName>
    </alternativeName>
    <alternativeName>
        <fullName evidence="1">Phosphate-transporting ATPase 2</fullName>
    </alternativeName>
</protein>
<comment type="function">
    <text evidence="1">Part of the ABC transporter complex PstSACB involved in phosphate import. Responsible for energy coupling to the transport system.</text>
</comment>
<comment type="catalytic activity">
    <reaction evidence="1">
        <text>phosphate(out) + ATP + H2O = ADP + 2 phosphate(in) + H(+)</text>
        <dbReference type="Rhea" id="RHEA:24440"/>
        <dbReference type="ChEBI" id="CHEBI:15377"/>
        <dbReference type="ChEBI" id="CHEBI:15378"/>
        <dbReference type="ChEBI" id="CHEBI:30616"/>
        <dbReference type="ChEBI" id="CHEBI:43474"/>
        <dbReference type="ChEBI" id="CHEBI:456216"/>
        <dbReference type="EC" id="7.3.2.1"/>
    </reaction>
</comment>
<comment type="subunit">
    <text evidence="1">The complex is composed of two ATP-binding proteins (PstB), two transmembrane proteins (PstC and PstA) and a solute-binding protein (PstS).</text>
</comment>
<comment type="subcellular location">
    <subcellularLocation>
        <location evidence="1">Cell membrane</location>
        <topology evidence="1">Peripheral membrane protein</topology>
    </subcellularLocation>
</comment>
<comment type="similarity">
    <text evidence="1">Belongs to the ABC transporter superfamily. Phosphate importer (TC 3.A.1.7) family.</text>
</comment>
<reference key="1">
    <citation type="journal article" date="2004" name="Genome Res.">
        <title>Genome sequence of Haloarcula marismortui: a halophilic archaeon from the Dead Sea.</title>
        <authorList>
            <person name="Baliga N.S."/>
            <person name="Bonneau R."/>
            <person name="Facciotti M.T."/>
            <person name="Pan M."/>
            <person name="Glusman G."/>
            <person name="Deutsch E.W."/>
            <person name="Shannon P."/>
            <person name="Chiu Y."/>
            <person name="Weng R.S."/>
            <person name="Gan R.R."/>
            <person name="Hung P."/>
            <person name="Date S.V."/>
            <person name="Marcotte E."/>
            <person name="Hood L."/>
            <person name="Ng W.V."/>
        </authorList>
    </citation>
    <scope>NUCLEOTIDE SEQUENCE [LARGE SCALE GENOMIC DNA]</scope>
    <source>
        <strain>ATCC 43049 / DSM 3752 / JCM 8966 / VKM B-1809</strain>
    </source>
</reference>
<accession>Q5V0G3</accession>
<sequence>MSDSINTEPSTDTQTNGERTVETTSPSAETTAGESEEQVRDEWRHYEFDGDTKLSVENLDVWYGDDHALKDVSMEIPENSVTALIGPSGCGKSTYLRCLNRMNDRIKAARIDGSVELEGTEIYDPNANLVELRKRIGMVFQSPNPFPKSIRENISYGPRKHGDINKGLLARLFGRDDTEQEGELVERSLKQAALWEEVSDRLDDNALGLSGGQQQRLCIARCLAVDPEVILMDEPASALDPIATSKIEDLVEELSKDYTVVIVTHNMQQAARISDQTAVFLTGGELVEYDDTDKIFENPESQRVEDYITGKFG</sequence>
<feature type="chain" id="PRO_0000272584" description="Phosphate import ATP-binding protein PstB 2">
    <location>
        <begin position="1"/>
        <end position="313"/>
    </location>
</feature>
<feature type="domain" description="ABC transporter" evidence="1">
    <location>
        <begin position="54"/>
        <end position="308"/>
    </location>
</feature>
<feature type="region of interest" description="Disordered" evidence="2">
    <location>
        <begin position="1"/>
        <end position="40"/>
    </location>
</feature>
<feature type="compositionally biased region" description="Polar residues" evidence="2">
    <location>
        <begin position="1"/>
        <end position="33"/>
    </location>
</feature>
<feature type="binding site" evidence="1">
    <location>
        <begin position="86"/>
        <end position="93"/>
    </location>
    <ligand>
        <name>ATP</name>
        <dbReference type="ChEBI" id="CHEBI:30616"/>
    </ligand>
</feature>
<dbReference type="EC" id="7.3.2.1" evidence="1"/>
<dbReference type="EMBL" id="AY596297">
    <property type="protein sequence ID" value="AAV46990.1"/>
    <property type="molecule type" value="Genomic_DNA"/>
</dbReference>
<dbReference type="SMR" id="Q5V0G3"/>
<dbReference type="STRING" id="272569.rrnAC2146"/>
<dbReference type="PaxDb" id="272569-rrnAC2146"/>
<dbReference type="EnsemblBacteria" id="AAV46990">
    <property type="protein sequence ID" value="AAV46990"/>
    <property type="gene ID" value="rrnAC2146"/>
</dbReference>
<dbReference type="KEGG" id="hma:rrnAC2146"/>
<dbReference type="PATRIC" id="fig|272569.17.peg.2788"/>
<dbReference type="eggNOG" id="arCOG00231">
    <property type="taxonomic scope" value="Archaea"/>
</dbReference>
<dbReference type="HOGENOM" id="CLU_000604_1_22_2"/>
<dbReference type="Proteomes" id="UP000001169">
    <property type="component" value="Chromosome I"/>
</dbReference>
<dbReference type="GO" id="GO:0005886">
    <property type="term" value="C:plasma membrane"/>
    <property type="evidence" value="ECO:0007669"/>
    <property type="project" value="UniProtKB-SubCell"/>
</dbReference>
<dbReference type="GO" id="GO:0005524">
    <property type="term" value="F:ATP binding"/>
    <property type="evidence" value="ECO:0007669"/>
    <property type="project" value="UniProtKB-KW"/>
</dbReference>
<dbReference type="GO" id="GO:0016887">
    <property type="term" value="F:ATP hydrolysis activity"/>
    <property type="evidence" value="ECO:0007669"/>
    <property type="project" value="InterPro"/>
</dbReference>
<dbReference type="GO" id="GO:0015415">
    <property type="term" value="F:ATPase-coupled phosphate ion transmembrane transporter activity"/>
    <property type="evidence" value="ECO:0007669"/>
    <property type="project" value="UniProtKB-EC"/>
</dbReference>
<dbReference type="GO" id="GO:0035435">
    <property type="term" value="P:phosphate ion transmembrane transport"/>
    <property type="evidence" value="ECO:0007669"/>
    <property type="project" value="InterPro"/>
</dbReference>
<dbReference type="CDD" id="cd03260">
    <property type="entry name" value="ABC_PstB_phosphate_transporter"/>
    <property type="match status" value="1"/>
</dbReference>
<dbReference type="Gene3D" id="3.40.50.300">
    <property type="entry name" value="P-loop containing nucleotide triphosphate hydrolases"/>
    <property type="match status" value="1"/>
</dbReference>
<dbReference type="InterPro" id="IPR003593">
    <property type="entry name" value="AAA+_ATPase"/>
</dbReference>
<dbReference type="InterPro" id="IPR003439">
    <property type="entry name" value="ABC_transporter-like_ATP-bd"/>
</dbReference>
<dbReference type="InterPro" id="IPR017871">
    <property type="entry name" value="ABC_transporter-like_CS"/>
</dbReference>
<dbReference type="InterPro" id="IPR027417">
    <property type="entry name" value="P-loop_NTPase"/>
</dbReference>
<dbReference type="InterPro" id="IPR005670">
    <property type="entry name" value="PstB-like"/>
</dbReference>
<dbReference type="NCBIfam" id="TIGR00972">
    <property type="entry name" value="3a0107s01c2"/>
    <property type="match status" value="1"/>
</dbReference>
<dbReference type="PANTHER" id="PTHR43423">
    <property type="entry name" value="ABC TRANSPORTER I FAMILY MEMBER 17"/>
    <property type="match status" value="1"/>
</dbReference>
<dbReference type="PANTHER" id="PTHR43423:SF1">
    <property type="entry name" value="ABC TRANSPORTER I FAMILY MEMBER 17"/>
    <property type="match status" value="1"/>
</dbReference>
<dbReference type="Pfam" id="PF00005">
    <property type="entry name" value="ABC_tran"/>
    <property type="match status" value="1"/>
</dbReference>
<dbReference type="SMART" id="SM00382">
    <property type="entry name" value="AAA"/>
    <property type="match status" value="1"/>
</dbReference>
<dbReference type="SUPFAM" id="SSF52540">
    <property type="entry name" value="P-loop containing nucleoside triphosphate hydrolases"/>
    <property type="match status" value="1"/>
</dbReference>
<dbReference type="PROSITE" id="PS00211">
    <property type="entry name" value="ABC_TRANSPORTER_1"/>
    <property type="match status" value="1"/>
</dbReference>
<dbReference type="PROSITE" id="PS50893">
    <property type="entry name" value="ABC_TRANSPORTER_2"/>
    <property type="match status" value="1"/>
</dbReference>
<dbReference type="PROSITE" id="PS51238">
    <property type="entry name" value="PSTB"/>
    <property type="match status" value="1"/>
</dbReference>